<protein>
    <recommendedName>
        <fullName>Putative uncharacterized protein YDL041W</fullName>
    </recommendedName>
</protein>
<organism>
    <name type="scientific">Saccharomyces cerevisiae (strain ATCC 204508 / S288c)</name>
    <name type="common">Baker's yeast</name>
    <dbReference type="NCBI Taxonomy" id="559292"/>
    <lineage>
        <taxon>Eukaryota</taxon>
        <taxon>Fungi</taxon>
        <taxon>Dikarya</taxon>
        <taxon>Ascomycota</taxon>
        <taxon>Saccharomycotina</taxon>
        <taxon>Saccharomycetes</taxon>
        <taxon>Saccharomycetales</taxon>
        <taxon>Saccharomycetaceae</taxon>
        <taxon>Saccharomyces</taxon>
    </lineage>
</organism>
<reference key="1">
    <citation type="journal article" date="1997" name="Yeast">
        <title>The sequence of a 36.7 kb segment on the left arm of chromosome IV from Saccharomyces cerevisiae reveals 20 non-overlapping open reading frames (ORFs) including SIT4, FAD1, NAM1, RNA11, SIR2, NAT1, PRP9, ACT2 and MPS1 and 11 new ORFs.</title>
        <authorList>
            <person name="Saren A.-M."/>
            <person name="Laamanen P."/>
            <person name="Lejarcegui J.B."/>
            <person name="Paulin L."/>
        </authorList>
    </citation>
    <scope>NUCLEOTIDE SEQUENCE [GENOMIC DNA]</scope>
    <source>
        <strain>ATCC 204508 / S288c</strain>
    </source>
</reference>
<reference key="2">
    <citation type="journal article" date="1997" name="Nature">
        <title>The nucleotide sequence of Saccharomyces cerevisiae chromosome IV.</title>
        <authorList>
            <person name="Jacq C."/>
            <person name="Alt-Moerbe J."/>
            <person name="Andre B."/>
            <person name="Arnold W."/>
            <person name="Bahr A."/>
            <person name="Ballesta J.P.G."/>
            <person name="Bargues M."/>
            <person name="Baron L."/>
            <person name="Becker A."/>
            <person name="Biteau N."/>
            <person name="Bloecker H."/>
            <person name="Blugeon C."/>
            <person name="Boskovic J."/>
            <person name="Brandt P."/>
            <person name="Brueckner M."/>
            <person name="Buitrago M.J."/>
            <person name="Coster F."/>
            <person name="Delaveau T."/>
            <person name="del Rey F."/>
            <person name="Dujon B."/>
            <person name="Eide L.G."/>
            <person name="Garcia-Cantalejo J.M."/>
            <person name="Goffeau A."/>
            <person name="Gomez-Peris A."/>
            <person name="Granotier C."/>
            <person name="Hanemann V."/>
            <person name="Hankeln T."/>
            <person name="Hoheisel J.D."/>
            <person name="Jaeger W."/>
            <person name="Jimenez A."/>
            <person name="Jonniaux J.-L."/>
            <person name="Kraemer C."/>
            <person name="Kuester H."/>
            <person name="Laamanen P."/>
            <person name="Legros Y."/>
            <person name="Louis E.J."/>
            <person name="Moeller-Rieker S."/>
            <person name="Monnet A."/>
            <person name="Moro M."/>
            <person name="Mueller-Auer S."/>
            <person name="Nussbaumer B."/>
            <person name="Paricio N."/>
            <person name="Paulin L."/>
            <person name="Perea J."/>
            <person name="Perez-Alonso M."/>
            <person name="Perez-Ortin J.E."/>
            <person name="Pohl T.M."/>
            <person name="Prydz H."/>
            <person name="Purnelle B."/>
            <person name="Rasmussen S.W."/>
            <person name="Remacha M.A."/>
            <person name="Revuelta J.L."/>
            <person name="Rieger M."/>
            <person name="Salom D."/>
            <person name="Saluz H.P."/>
            <person name="Saiz J.E."/>
            <person name="Saren A.-M."/>
            <person name="Schaefer M."/>
            <person name="Scharfe M."/>
            <person name="Schmidt E.R."/>
            <person name="Schneider C."/>
            <person name="Scholler P."/>
            <person name="Schwarz S."/>
            <person name="Soler-Mira A."/>
            <person name="Urrestarazu L.A."/>
            <person name="Verhasselt P."/>
            <person name="Vissers S."/>
            <person name="Voet M."/>
            <person name="Volckaert G."/>
            <person name="Wagner G."/>
            <person name="Wambutt R."/>
            <person name="Wedler E."/>
            <person name="Wedler H."/>
            <person name="Woelfl S."/>
            <person name="Harris D.E."/>
            <person name="Bowman S."/>
            <person name="Brown D."/>
            <person name="Churcher C.M."/>
            <person name="Connor R."/>
            <person name="Dedman K."/>
            <person name="Gentles S."/>
            <person name="Hamlin N."/>
            <person name="Hunt S."/>
            <person name="Jones L."/>
            <person name="McDonald S."/>
            <person name="Murphy L.D."/>
            <person name="Niblett D."/>
            <person name="Odell C."/>
            <person name="Oliver K."/>
            <person name="Rajandream M.A."/>
            <person name="Richards C."/>
            <person name="Shore L."/>
            <person name="Walsh S.V."/>
            <person name="Barrell B.G."/>
            <person name="Dietrich F.S."/>
            <person name="Mulligan J.T."/>
            <person name="Allen E."/>
            <person name="Araujo R."/>
            <person name="Aviles E."/>
            <person name="Berno A."/>
            <person name="Carpenter J."/>
            <person name="Chen E."/>
            <person name="Cherry J.M."/>
            <person name="Chung E."/>
            <person name="Duncan M."/>
            <person name="Hunicke-Smith S."/>
            <person name="Hyman R.W."/>
            <person name="Komp C."/>
            <person name="Lashkari D."/>
            <person name="Lew H."/>
            <person name="Lin D."/>
            <person name="Mosedale D."/>
            <person name="Nakahara K."/>
            <person name="Namath A."/>
            <person name="Oefner P."/>
            <person name="Oh C."/>
            <person name="Petel F.X."/>
            <person name="Roberts D."/>
            <person name="Schramm S."/>
            <person name="Schroeder M."/>
            <person name="Shogren T."/>
            <person name="Shroff N."/>
            <person name="Winant A."/>
            <person name="Yelton M.A."/>
            <person name="Botstein D."/>
            <person name="Davis R.W."/>
            <person name="Johnston M."/>
            <person name="Andrews S."/>
            <person name="Brinkman R."/>
            <person name="Cooper J."/>
            <person name="Ding H."/>
            <person name="Du Z."/>
            <person name="Favello A."/>
            <person name="Fulton L."/>
            <person name="Gattung S."/>
            <person name="Greco T."/>
            <person name="Hallsworth K."/>
            <person name="Hawkins J."/>
            <person name="Hillier L.W."/>
            <person name="Jier M."/>
            <person name="Johnson D."/>
            <person name="Johnston L."/>
            <person name="Kirsten J."/>
            <person name="Kucaba T."/>
            <person name="Langston Y."/>
            <person name="Latreille P."/>
            <person name="Le T."/>
            <person name="Mardis E."/>
            <person name="Menezes S."/>
            <person name="Miller N."/>
            <person name="Nhan M."/>
            <person name="Pauley A."/>
            <person name="Peluso D."/>
            <person name="Rifkin L."/>
            <person name="Riles L."/>
            <person name="Taich A."/>
            <person name="Trevaskis E."/>
            <person name="Vignati D."/>
            <person name="Wilcox L."/>
            <person name="Wohldman P."/>
            <person name="Vaudin M."/>
            <person name="Wilson R."/>
            <person name="Waterston R."/>
            <person name="Albermann K."/>
            <person name="Hani J."/>
            <person name="Heumann K."/>
            <person name="Kleine K."/>
            <person name="Mewes H.-W."/>
            <person name="Zollner A."/>
            <person name="Zaccaria P."/>
        </authorList>
    </citation>
    <scope>NUCLEOTIDE SEQUENCE [LARGE SCALE GENOMIC DNA]</scope>
    <source>
        <strain>ATCC 204508 / S288c</strain>
    </source>
</reference>
<reference key="3">
    <citation type="journal article" date="2014" name="G3 (Bethesda)">
        <title>The reference genome sequence of Saccharomyces cerevisiae: Then and now.</title>
        <authorList>
            <person name="Engel S.R."/>
            <person name="Dietrich F.S."/>
            <person name="Fisk D.G."/>
            <person name="Binkley G."/>
            <person name="Balakrishnan R."/>
            <person name="Costanzo M.C."/>
            <person name="Dwight S.S."/>
            <person name="Hitz B.C."/>
            <person name="Karra K."/>
            <person name="Nash R.S."/>
            <person name="Weng S."/>
            <person name="Wong E.D."/>
            <person name="Lloyd P."/>
            <person name="Skrzypek M.S."/>
            <person name="Miyasato S.R."/>
            <person name="Simison M."/>
            <person name="Cherry J.M."/>
        </authorList>
    </citation>
    <scope>GENOME REANNOTATION</scope>
    <source>
        <strain>ATCC 204508 / S288c</strain>
    </source>
</reference>
<sequence length="117" mass="11971">MIGPLGVSGFKTSLDIDTTEAADTAKGSMSLVGLSSIDATSPSAALVCPSGSVVLVSLKESGCATFIFLCEGSSLFIMSSGCFLIASLSCVGLTVFETLFSLVFDTAYFICGMVIQL</sequence>
<evidence type="ECO:0000255" key="1"/>
<evidence type="ECO:0000305" key="2"/>
<evidence type="ECO:0000305" key="3">
    <source>
    </source>
</evidence>
<gene>
    <name type="ordered locus">YDL041W</name>
    <name type="ORF">D2717</name>
</gene>
<name>YD041_YEAST</name>
<comment type="subcellular location">
    <subcellularLocation>
        <location evidence="2">Membrane</location>
        <topology evidence="2">Single-pass membrane protein</topology>
    </subcellularLocation>
</comment>
<comment type="miscellaneous">
    <text evidence="2">Overlaps SIR2.</text>
</comment>
<comment type="caution">
    <text evidence="3">Product of a dubious gene prediction unlikely to encode a functional protein. Because of that it is not part of the S.cerevisiae S288c complete/reference proteome set.</text>
</comment>
<keyword id="KW-0472">Membrane</keyword>
<keyword id="KW-0812">Transmembrane</keyword>
<keyword id="KW-1133">Transmembrane helix</keyword>
<dbReference type="EMBL" id="Z71781">
    <property type="protein sequence ID" value="CAA96448.1"/>
    <property type="molecule type" value="Genomic_DNA"/>
</dbReference>
<dbReference type="EMBL" id="Z74090">
    <property type="protein sequence ID" value="CAA98601.1"/>
    <property type="molecule type" value="Genomic_DNA"/>
</dbReference>
<dbReference type="PIR" id="S67574">
    <property type="entry name" value="S67574"/>
</dbReference>
<dbReference type="DIP" id="DIP-5015N"/>
<dbReference type="IntAct" id="Q12352">
    <property type="interactions" value="2"/>
</dbReference>
<dbReference type="PaxDb" id="4932-YDL041W"/>
<dbReference type="PRIDE" id="Q12352"/>
<dbReference type="EnsemblFungi" id="YDL041W_mRNA">
    <property type="protein sequence ID" value="YDL041W"/>
    <property type="gene ID" value="YDL041W"/>
</dbReference>
<dbReference type="AGR" id="SGD:S000002199"/>
<dbReference type="SGD" id="S000002199">
    <property type="gene designation" value="YDL041W"/>
</dbReference>
<dbReference type="HOGENOM" id="CLU_2086668_0_0_1"/>
<dbReference type="GO" id="GO:0016020">
    <property type="term" value="C:membrane"/>
    <property type="evidence" value="ECO:0007669"/>
    <property type="project" value="UniProtKB-SubCell"/>
</dbReference>
<proteinExistence type="uncertain"/>
<accession>Q12352</accession>
<feature type="chain" id="PRO_0000299850" description="Putative uncharacterized protein YDL041W">
    <location>
        <begin position="1"/>
        <end position="117"/>
    </location>
</feature>
<feature type="transmembrane region" description="Helical" evidence="1">
    <location>
        <begin position="76"/>
        <end position="96"/>
    </location>
</feature>